<proteinExistence type="evidence at protein level"/>
<dbReference type="EC" id="2.1.1.288"/>
<dbReference type="EMBL" id="L35154">
    <property type="protein sequence ID" value="AAB16936.1"/>
    <property type="molecule type" value="Genomic_DNA"/>
</dbReference>
<dbReference type="SMR" id="Q55214"/>
<dbReference type="KEGG" id="ag:AAB16936"/>
<dbReference type="BioCyc" id="MetaCyc:MONOMER-18181"/>
<dbReference type="BRENDA" id="2.1.1.288">
    <property type="organism ID" value="1284"/>
</dbReference>
<dbReference type="UniPathway" id="UPA00054"/>
<dbReference type="UniPathway" id="UPA01040"/>
<dbReference type="UniPathway" id="UPA01042"/>
<dbReference type="UniPathway" id="UPA01043"/>
<dbReference type="GO" id="GO:0008168">
    <property type="term" value="F:methyltransferase activity"/>
    <property type="evidence" value="ECO:0000314"/>
    <property type="project" value="UniProtKB"/>
</dbReference>
<dbReference type="GO" id="GO:0017000">
    <property type="term" value="P:antibiotic biosynthetic process"/>
    <property type="evidence" value="ECO:0000314"/>
    <property type="project" value="UniProtKB"/>
</dbReference>
<dbReference type="GO" id="GO:1901771">
    <property type="term" value="P:daunorubicin biosynthetic process"/>
    <property type="evidence" value="ECO:0000314"/>
    <property type="project" value="UniProtKB"/>
</dbReference>
<dbReference type="GO" id="GO:0044598">
    <property type="term" value="P:doxorubicin metabolic process"/>
    <property type="evidence" value="ECO:0000314"/>
    <property type="project" value="UniProtKB"/>
</dbReference>
<dbReference type="GO" id="GO:0032259">
    <property type="term" value="P:methylation"/>
    <property type="evidence" value="ECO:0007669"/>
    <property type="project" value="UniProtKB-KW"/>
</dbReference>
<dbReference type="CDD" id="cd02440">
    <property type="entry name" value="AdoMet_MTases"/>
    <property type="match status" value="1"/>
</dbReference>
<dbReference type="FunFam" id="3.40.50.150:FF:000675">
    <property type="entry name" value="Aklanonic acid methyltransferase DnrC"/>
    <property type="match status" value="1"/>
</dbReference>
<dbReference type="Gene3D" id="3.40.50.150">
    <property type="entry name" value="Vaccinia Virus protein VP39"/>
    <property type="match status" value="1"/>
</dbReference>
<dbReference type="InterPro" id="IPR041698">
    <property type="entry name" value="Methyltransf_25"/>
</dbReference>
<dbReference type="InterPro" id="IPR029063">
    <property type="entry name" value="SAM-dependent_MTases_sf"/>
</dbReference>
<dbReference type="PANTHER" id="PTHR43591">
    <property type="entry name" value="METHYLTRANSFERASE"/>
    <property type="match status" value="1"/>
</dbReference>
<dbReference type="PANTHER" id="PTHR43591:SF99">
    <property type="entry name" value="OS06G0646000 PROTEIN"/>
    <property type="match status" value="1"/>
</dbReference>
<dbReference type="Pfam" id="PF13649">
    <property type="entry name" value="Methyltransf_25"/>
    <property type="match status" value="1"/>
</dbReference>
<dbReference type="SUPFAM" id="SSF53335">
    <property type="entry name" value="S-adenosyl-L-methionine-dependent methyltransferases"/>
    <property type="match status" value="1"/>
</dbReference>
<organism>
    <name type="scientific">Streptomyces sp. (strain C5)</name>
    <dbReference type="NCBI Taxonomy" id="45212"/>
    <lineage>
        <taxon>Bacteria</taxon>
        <taxon>Bacillati</taxon>
        <taxon>Actinomycetota</taxon>
        <taxon>Actinomycetes</taxon>
        <taxon>Kitasatosporales</taxon>
        <taxon>Streptomycetaceae</taxon>
        <taxon>Streptomyces</taxon>
    </lineage>
</organism>
<protein>
    <recommendedName>
        <fullName>Aklanonic acid methyltransferase DauC</fullName>
        <shortName>AAMT</shortName>
        <ecNumber>2.1.1.288</ecNumber>
    </recommendedName>
</protein>
<gene>
    <name type="primary">dauC</name>
</gene>
<evidence type="ECO:0000269" key="1">
    <source>
    </source>
</evidence>
<evidence type="ECO:0000269" key="2">
    <source ref="2"/>
</evidence>
<evidence type="ECO:0000269" key="3">
    <source ref="3"/>
</evidence>
<evidence type="ECO:0000305" key="4"/>
<keyword id="KW-0045">Antibiotic biosynthesis</keyword>
<keyword id="KW-0489">Methyltransferase</keyword>
<keyword id="KW-0949">S-adenosyl-L-methionine</keyword>
<keyword id="KW-0808">Transferase</keyword>
<name>DNRC_STRS5</name>
<accession>Q55214</accession>
<accession>Q55227</accession>
<sequence>MQDSSYKKQVTQAFDQSSSTYDRLGVEFFTPMGRRLVDISEPVTGERVLDIGCGRGACLFPAAEKVGSQGCVHGIDIAPGMIEEARKEATERGLRNISLMVMDAETPGFPARSFDLVMGSYSVIFLPDAVGALARYADILDHGGRIAFTSPVFRAGTFPFLPPEFTPLIPQALLEHLPEQWRPEALVRRFNSWLERAEDLVRTLEGCGYARLRQSTSRCG</sequence>
<comment type="function">
    <text evidence="1 2 3">Involved in the biosynthesis of aklavinone which is an important precursor common to the formation of the clinically significant anthracyclines such as carminomycin, daunorubicin (daunomycin), rhodomycin, aclacinomycin T (aklavin) and aclacinomycin A (aclarubicin). These compounds are aromatic polyketide antibiotics that exhibit high cytotoxicity and are widely applied in the chemotherapy of a variety of cancers. Catalyzes the methyl esterification of aklanonic acid to yield aklanonic acid methyl ester.</text>
</comment>
<comment type="catalytic activity">
    <reaction evidence="1">
        <text>aklanonate + S-adenosyl-L-methionine = methyl aklanonate + S-adenosyl-L-homocysteine</text>
        <dbReference type="Rhea" id="RHEA:37875"/>
        <dbReference type="ChEBI" id="CHEBI:57856"/>
        <dbReference type="ChEBI" id="CHEBI:59789"/>
        <dbReference type="ChEBI" id="CHEBI:77987"/>
        <dbReference type="ChEBI" id="CHEBI:77988"/>
        <dbReference type="EC" id="2.1.1.288"/>
    </reaction>
</comment>
<comment type="pathway">
    <text>Antibiotic biosynthesis; daunorubicin biosynthesis.</text>
</comment>
<comment type="pathway">
    <text>Antibiotic biosynthesis; carminomycin biosynthesis.</text>
</comment>
<comment type="pathway">
    <text>Antibiotic biosynthesis; rhodomycin biosynthesis.</text>
</comment>
<comment type="pathway">
    <text>Antibiotic biosynthesis; aclacinomycin biosynthesis.</text>
</comment>
<comment type="subunit">
    <text evidence="1">Homodimer.</text>
</comment>
<comment type="disruption phenotype">
    <text evidence="2 3">Cells lacking this gene accumulate aklanonate.</text>
</comment>
<comment type="similarity">
    <text evidence="4">Belongs to the methyltransferase superfamily. DnrC family.</text>
</comment>
<reference key="1">
    <citation type="journal article" date="1995" name="J. Bacteriol.">
        <title>Analysis of clustered genes encoding both early and late steps in daunomycin biosynthesis by Streptomyces sp. strain C5.</title>
        <authorList>
            <person name="Dickens M.L."/>
            <person name="Ye J."/>
            <person name="Strohl W.R."/>
        </authorList>
    </citation>
    <scope>NUCLEOTIDE SEQUENCE [GENOMIC DNA]</scope>
    <scope>FUNCTION</scope>
    <scope>CATALYTIC ACTIVITY</scope>
    <scope>SUBUNIT</scope>
    <source>
        <strain>C5</strain>
    </source>
</reference>
<reference key="2">
    <citation type="journal article" date="1990" name="J. Gen. Microbiol.">
        <title>Biosynthesis of anthracyclines: analysis of mutants of Streptomyces sp. strain C5 blocked in daunomycin biosynthesis.</title>
        <authorList>
            <person name="Bartel P.L."/>
            <person name="Connors N.C."/>
            <person name="William R.S."/>
        </authorList>
    </citation>
    <scope>FUNCTION</scope>
    <scope>DISRUPTION PHENOTYPE</scope>
    <source>
        <strain>C5</strain>
    </source>
</reference>
<reference key="3">
    <citation type="journal article" date="1990" name="J. Gen. Microbiol.">
        <title>Biosynthesis of anthracyclines: enzymic conversion of aklanonic acid to aklavinone and epsilon-rhodomycinone by anthracycline-producing streptomycetes.</title>
        <authorList>
            <person name="Connors N.C."/>
            <person name="Bartel P.L."/>
            <person name="William R.S."/>
        </authorList>
    </citation>
    <scope>FUNCTION</scope>
    <scope>DISRUPTION PHENOTYPE</scope>
    <source>
        <strain>C5</strain>
    </source>
</reference>
<feature type="chain" id="PRO_0000425669" description="Aklanonic acid methyltransferase DauC">
    <location>
        <begin position="1"/>
        <end position="220"/>
    </location>
</feature>